<accession>Q7V4Q5</accession>
<proteinExistence type="inferred from homology"/>
<sequence>MSVTPSIDAVRDLRAASCGPVGAPSVTSDLSENIILTSLDDLHNWARLSSLWPLLYGTACCFIEFAALIGSRFDFDRFGLVPRSSPRQADLLIVAGTVTMKMAPALVRLYEQMPEPKYVIAMGACTITGGMFSADSTTAVRGVDKLIPVDLYLPGCPPRPEAIFDAVIKLRKKVGDESVAERIKIAQTHRYFTVPHHMKRVEPIVTGAYLSADTQKAALKPGAGLPMAAELNTPEIDVSPASQSSSTYES</sequence>
<name>NDHK_PROMM</name>
<dbReference type="EC" id="7.1.1.-" evidence="1"/>
<dbReference type="EMBL" id="BX548175">
    <property type="protein sequence ID" value="CAE22067.1"/>
    <property type="molecule type" value="Genomic_DNA"/>
</dbReference>
<dbReference type="RefSeq" id="WP_011131258.1">
    <property type="nucleotide sequence ID" value="NC_005071.1"/>
</dbReference>
<dbReference type="SMR" id="Q7V4Q5"/>
<dbReference type="KEGG" id="pmt:PMT_1892"/>
<dbReference type="eggNOG" id="COG0377">
    <property type="taxonomic scope" value="Bacteria"/>
</dbReference>
<dbReference type="HOGENOM" id="CLU_055737_2_0_3"/>
<dbReference type="OrthoDB" id="9786737at2"/>
<dbReference type="Proteomes" id="UP000001423">
    <property type="component" value="Chromosome"/>
</dbReference>
<dbReference type="GO" id="GO:0031676">
    <property type="term" value="C:plasma membrane-derived thylakoid membrane"/>
    <property type="evidence" value="ECO:0007669"/>
    <property type="project" value="UniProtKB-SubCell"/>
</dbReference>
<dbReference type="GO" id="GO:0045271">
    <property type="term" value="C:respiratory chain complex I"/>
    <property type="evidence" value="ECO:0007669"/>
    <property type="project" value="TreeGrafter"/>
</dbReference>
<dbReference type="GO" id="GO:0051539">
    <property type="term" value="F:4 iron, 4 sulfur cluster binding"/>
    <property type="evidence" value="ECO:0007669"/>
    <property type="project" value="UniProtKB-KW"/>
</dbReference>
<dbReference type="GO" id="GO:0005506">
    <property type="term" value="F:iron ion binding"/>
    <property type="evidence" value="ECO:0007669"/>
    <property type="project" value="UniProtKB-UniRule"/>
</dbReference>
<dbReference type="GO" id="GO:0008137">
    <property type="term" value="F:NADH dehydrogenase (ubiquinone) activity"/>
    <property type="evidence" value="ECO:0007669"/>
    <property type="project" value="InterPro"/>
</dbReference>
<dbReference type="GO" id="GO:0048038">
    <property type="term" value="F:quinone binding"/>
    <property type="evidence" value="ECO:0007669"/>
    <property type="project" value="UniProtKB-KW"/>
</dbReference>
<dbReference type="GO" id="GO:0009060">
    <property type="term" value="P:aerobic respiration"/>
    <property type="evidence" value="ECO:0007669"/>
    <property type="project" value="TreeGrafter"/>
</dbReference>
<dbReference type="GO" id="GO:0015990">
    <property type="term" value="P:electron transport coupled proton transport"/>
    <property type="evidence" value="ECO:0007669"/>
    <property type="project" value="TreeGrafter"/>
</dbReference>
<dbReference type="GO" id="GO:0019684">
    <property type="term" value="P:photosynthesis, light reaction"/>
    <property type="evidence" value="ECO:0007669"/>
    <property type="project" value="UniProtKB-UniRule"/>
</dbReference>
<dbReference type="FunFam" id="3.40.50.12280:FF:000003">
    <property type="entry name" value="NAD(P)H-quinone oxidoreductase subunit K, chloroplastic"/>
    <property type="match status" value="1"/>
</dbReference>
<dbReference type="Gene3D" id="3.40.50.12280">
    <property type="match status" value="1"/>
</dbReference>
<dbReference type="HAMAP" id="MF_01356">
    <property type="entry name" value="NDH1_NuoB"/>
    <property type="match status" value="1"/>
</dbReference>
<dbReference type="InterPro" id="IPR006137">
    <property type="entry name" value="NADH_UbQ_OxRdtase-like_20kDa"/>
</dbReference>
<dbReference type="InterPro" id="IPR006138">
    <property type="entry name" value="NADH_UQ_OxRdtase_20Kd_su"/>
</dbReference>
<dbReference type="NCBIfam" id="TIGR01957">
    <property type="entry name" value="nuoB_fam"/>
    <property type="match status" value="1"/>
</dbReference>
<dbReference type="NCBIfam" id="NF005012">
    <property type="entry name" value="PRK06411.1"/>
    <property type="match status" value="1"/>
</dbReference>
<dbReference type="PANTHER" id="PTHR11995">
    <property type="entry name" value="NADH DEHYDROGENASE"/>
    <property type="match status" value="1"/>
</dbReference>
<dbReference type="PANTHER" id="PTHR11995:SF14">
    <property type="entry name" value="NADH DEHYDROGENASE [UBIQUINONE] IRON-SULFUR PROTEIN 7, MITOCHONDRIAL"/>
    <property type="match status" value="1"/>
</dbReference>
<dbReference type="Pfam" id="PF01058">
    <property type="entry name" value="Oxidored_q6"/>
    <property type="match status" value="1"/>
</dbReference>
<dbReference type="SUPFAM" id="SSF56770">
    <property type="entry name" value="HydA/Nqo6-like"/>
    <property type="match status" value="1"/>
</dbReference>
<dbReference type="PROSITE" id="PS01150">
    <property type="entry name" value="COMPLEX1_20K"/>
    <property type="match status" value="1"/>
</dbReference>
<feature type="chain" id="PRO_0000358455" description="NAD(P)H-quinone oxidoreductase subunit K">
    <location>
        <begin position="1"/>
        <end position="250"/>
    </location>
</feature>
<feature type="region of interest" description="Disordered" evidence="2">
    <location>
        <begin position="230"/>
        <end position="250"/>
    </location>
</feature>
<feature type="compositionally biased region" description="Polar residues" evidence="2">
    <location>
        <begin position="240"/>
        <end position="250"/>
    </location>
</feature>
<feature type="binding site" evidence="1">
    <location>
        <position position="60"/>
    </location>
    <ligand>
        <name>[4Fe-4S] cluster</name>
        <dbReference type="ChEBI" id="CHEBI:49883"/>
    </ligand>
</feature>
<feature type="binding site" evidence="1">
    <location>
        <position position="61"/>
    </location>
    <ligand>
        <name>[4Fe-4S] cluster</name>
        <dbReference type="ChEBI" id="CHEBI:49883"/>
    </ligand>
</feature>
<feature type="binding site" evidence="1">
    <location>
        <position position="125"/>
    </location>
    <ligand>
        <name>[4Fe-4S] cluster</name>
        <dbReference type="ChEBI" id="CHEBI:49883"/>
    </ligand>
</feature>
<feature type="binding site" evidence="1">
    <location>
        <position position="156"/>
    </location>
    <ligand>
        <name>[4Fe-4S] cluster</name>
        <dbReference type="ChEBI" id="CHEBI:49883"/>
    </ligand>
</feature>
<comment type="function">
    <text evidence="1">NDH-1 shuttles electrons from an unknown electron donor, via FMN and iron-sulfur (Fe-S) centers, to quinones in the respiratory and/or the photosynthetic chain. The immediate electron acceptor for the enzyme in this species is believed to be plastoquinone. Couples the redox reaction to proton translocation, and thus conserves the redox energy in a proton gradient. Cyanobacterial NDH-1 also plays a role in inorganic carbon-concentration.</text>
</comment>
<comment type="catalytic activity">
    <reaction evidence="1">
        <text>a plastoquinone + NADH + (n+1) H(+)(in) = a plastoquinol + NAD(+) + n H(+)(out)</text>
        <dbReference type="Rhea" id="RHEA:42608"/>
        <dbReference type="Rhea" id="RHEA-COMP:9561"/>
        <dbReference type="Rhea" id="RHEA-COMP:9562"/>
        <dbReference type="ChEBI" id="CHEBI:15378"/>
        <dbReference type="ChEBI" id="CHEBI:17757"/>
        <dbReference type="ChEBI" id="CHEBI:57540"/>
        <dbReference type="ChEBI" id="CHEBI:57945"/>
        <dbReference type="ChEBI" id="CHEBI:62192"/>
    </reaction>
</comment>
<comment type="catalytic activity">
    <reaction evidence="1">
        <text>a plastoquinone + NADPH + (n+1) H(+)(in) = a plastoquinol + NADP(+) + n H(+)(out)</text>
        <dbReference type="Rhea" id="RHEA:42612"/>
        <dbReference type="Rhea" id="RHEA-COMP:9561"/>
        <dbReference type="Rhea" id="RHEA-COMP:9562"/>
        <dbReference type="ChEBI" id="CHEBI:15378"/>
        <dbReference type="ChEBI" id="CHEBI:17757"/>
        <dbReference type="ChEBI" id="CHEBI:57783"/>
        <dbReference type="ChEBI" id="CHEBI:58349"/>
        <dbReference type="ChEBI" id="CHEBI:62192"/>
    </reaction>
</comment>
<comment type="cofactor">
    <cofactor evidence="1">
        <name>[4Fe-4S] cluster</name>
        <dbReference type="ChEBI" id="CHEBI:49883"/>
    </cofactor>
    <text evidence="1">Binds 1 [4Fe-4S] cluster.</text>
</comment>
<comment type="subunit">
    <text evidence="1">NDH-1 can be composed of about 15 different subunits; different subcomplexes with different compositions have been identified which probably have different functions.</text>
</comment>
<comment type="subcellular location">
    <subcellularLocation>
        <location evidence="1">Cellular thylakoid membrane</location>
        <topology evidence="1">Peripheral membrane protein</topology>
        <orientation evidence="1">Cytoplasmic side</orientation>
    </subcellularLocation>
</comment>
<comment type="similarity">
    <text evidence="1">Belongs to the complex I 20 kDa subunit family.</text>
</comment>
<gene>
    <name evidence="1" type="primary">ndhK</name>
    <name type="ordered locus">PMT_1892</name>
</gene>
<protein>
    <recommendedName>
        <fullName evidence="1">NAD(P)H-quinone oxidoreductase subunit K</fullName>
        <ecNumber evidence="1">7.1.1.-</ecNumber>
    </recommendedName>
    <alternativeName>
        <fullName evidence="1">NAD(P)H dehydrogenase I subunit K</fullName>
    </alternativeName>
    <alternativeName>
        <fullName evidence="1">NDH-1 subunit K</fullName>
        <shortName evidence="1">NDH-K</shortName>
    </alternativeName>
</protein>
<organism>
    <name type="scientific">Prochlorococcus marinus (strain MIT 9313)</name>
    <dbReference type="NCBI Taxonomy" id="74547"/>
    <lineage>
        <taxon>Bacteria</taxon>
        <taxon>Bacillati</taxon>
        <taxon>Cyanobacteriota</taxon>
        <taxon>Cyanophyceae</taxon>
        <taxon>Synechococcales</taxon>
        <taxon>Prochlorococcaceae</taxon>
        <taxon>Prochlorococcus</taxon>
    </lineage>
</organism>
<keyword id="KW-0004">4Fe-4S</keyword>
<keyword id="KW-0408">Iron</keyword>
<keyword id="KW-0411">Iron-sulfur</keyword>
<keyword id="KW-0472">Membrane</keyword>
<keyword id="KW-0479">Metal-binding</keyword>
<keyword id="KW-0520">NAD</keyword>
<keyword id="KW-0521">NADP</keyword>
<keyword id="KW-0618">Plastoquinone</keyword>
<keyword id="KW-0874">Quinone</keyword>
<keyword id="KW-1185">Reference proteome</keyword>
<keyword id="KW-0793">Thylakoid</keyword>
<keyword id="KW-1278">Translocase</keyword>
<keyword id="KW-0813">Transport</keyword>
<evidence type="ECO:0000255" key="1">
    <source>
        <dbReference type="HAMAP-Rule" id="MF_01356"/>
    </source>
</evidence>
<evidence type="ECO:0000256" key="2">
    <source>
        <dbReference type="SAM" id="MobiDB-lite"/>
    </source>
</evidence>
<reference key="1">
    <citation type="journal article" date="2003" name="Nature">
        <title>Genome divergence in two Prochlorococcus ecotypes reflects oceanic niche differentiation.</title>
        <authorList>
            <person name="Rocap G."/>
            <person name="Larimer F.W."/>
            <person name="Lamerdin J.E."/>
            <person name="Malfatti S."/>
            <person name="Chain P."/>
            <person name="Ahlgren N.A."/>
            <person name="Arellano A."/>
            <person name="Coleman M."/>
            <person name="Hauser L."/>
            <person name="Hess W.R."/>
            <person name="Johnson Z.I."/>
            <person name="Land M.L."/>
            <person name="Lindell D."/>
            <person name="Post A.F."/>
            <person name="Regala W."/>
            <person name="Shah M."/>
            <person name="Shaw S.L."/>
            <person name="Steglich C."/>
            <person name="Sullivan M.B."/>
            <person name="Ting C.S."/>
            <person name="Tolonen A."/>
            <person name="Webb E.A."/>
            <person name="Zinser E.R."/>
            <person name="Chisholm S.W."/>
        </authorList>
    </citation>
    <scope>NUCLEOTIDE SEQUENCE [LARGE SCALE GENOMIC DNA]</scope>
    <source>
        <strain>MIT 9313</strain>
    </source>
</reference>